<comment type="function">
    <text evidence="2">Catalyzes the NADPH-dependent reduction of carbonyl compounds to their corresponding alcohols. Has low NADPH-dependent oxidoreductase activity. Acts on several orthoquinones, as well as on non-quinone compounds, such as isatin or on the anticancer drug oracin. Best substrates for CBR3 is 1,2- naphthoquinone, hence could play a role in protection against cytotoxicity of exogenous quinones. Exerts activity toward ortho-quinones but not paraquinones. No endogenous substrate for CBR3 except isatin has been identified.</text>
</comment>
<comment type="catalytic activity">
    <reaction evidence="2">
        <text>a secondary alcohol + NADP(+) = a ketone + NADPH + H(+)</text>
        <dbReference type="Rhea" id="RHEA:19257"/>
        <dbReference type="ChEBI" id="CHEBI:15378"/>
        <dbReference type="ChEBI" id="CHEBI:17087"/>
        <dbReference type="ChEBI" id="CHEBI:35681"/>
        <dbReference type="ChEBI" id="CHEBI:57783"/>
        <dbReference type="ChEBI" id="CHEBI:58349"/>
        <dbReference type="EC" id="1.1.1.184"/>
    </reaction>
    <physiologicalReaction direction="left-to-right" evidence="2">
        <dbReference type="Rhea" id="RHEA:19258"/>
    </physiologicalReaction>
</comment>
<comment type="catalytic activity">
    <reaction evidence="2">
        <text>a quinone + NADPH + H(+) = a quinol + NADP(+)</text>
        <dbReference type="Rhea" id="RHEA:46164"/>
        <dbReference type="ChEBI" id="CHEBI:15378"/>
        <dbReference type="ChEBI" id="CHEBI:24646"/>
        <dbReference type="ChEBI" id="CHEBI:57783"/>
        <dbReference type="ChEBI" id="CHEBI:58349"/>
        <dbReference type="ChEBI" id="CHEBI:132124"/>
        <dbReference type="EC" id="1.6.5.10"/>
    </reaction>
    <physiologicalReaction direction="left-to-right" evidence="2">
        <dbReference type="Rhea" id="RHEA:46165"/>
    </physiologicalReaction>
</comment>
<comment type="subcellular location">
    <subcellularLocation>
        <location evidence="2">Cytoplasm</location>
    </subcellularLocation>
</comment>
<comment type="similarity">
    <text evidence="6">Belongs to the short-chain dehydrogenases/reductases (SDR) family.</text>
</comment>
<protein>
    <recommendedName>
        <fullName>Carbonyl reductase [NADPH] 3</fullName>
        <ecNumber evidence="2">1.1.1.184</ecNumber>
    </recommendedName>
    <alternativeName>
        <fullName>NADPH-dependent carbonyl reductase 3</fullName>
    </alternativeName>
    <alternativeName>
        <fullName>Quinone reductase CBR3</fullName>
        <ecNumber evidence="2">1.6.5.10</ecNumber>
    </alternativeName>
</protein>
<name>CBR3_MOUSE</name>
<proteinExistence type="evidence at protein level"/>
<sequence>MSSCSRVALVTGANKGIGFAITRDLCRKFSGDVVLTARDEARGRAAVQQLQAEGLSPRFHQLDIDDPQSIRALRDFLRKEYGGLNVLVNNAGIAFRMDDPTPFDIQAEVTLKTNFFATRNVCTELLPIMKPHGRVVNISSLQGLKALENCREDLQEKFRCDTLTEVDLVDLMKKFVEDTKNEVHEREGWPDSAYGVSKLGVTVLTRILARQLDEKRKADRILLNACCPGWVKTDMARDQGSRTVEEGAETPVYLALLPPDATEPHGQLVRDKVVQTW</sequence>
<accession>Q8K354</accession>
<dbReference type="EC" id="1.1.1.184" evidence="2"/>
<dbReference type="EC" id="1.6.5.10" evidence="2"/>
<dbReference type="EMBL" id="AK028150">
    <property type="protein sequence ID" value="BAC25778.1"/>
    <property type="molecule type" value="mRNA"/>
</dbReference>
<dbReference type="EMBL" id="AC154449">
    <property type="status" value="NOT_ANNOTATED_CDS"/>
    <property type="molecule type" value="Genomic_DNA"/>
</dbReference>
<dbReference type="EMBL" id="CH466602">
    <property type="protein sequence ID" value="EDL03763.1"/>
    <property type="molecule type" value="Genomic_DNA"/>
</dbReference>
<dbReference type="EMBL" id="BC028763">
    <property type="protein sequence ID" value="AAH28763.1"/>
    <property type="molecule type" value="mRNA"/>
</dbReference>
<dbReference type="EMBL" id="BC087735">
    <property type="protein sequence ID" value="AAH87735.1"/>
    <property type="molecule type" value="mRNA"/>
</dbReference>
<dbReference type="EMBL" id="BC096658">
    <property type="protein sequence ID" value="AAH96658.1"/>
    <property type="molecule type" value="mRNA"/>
</dbReference>
<dbReference type="CCDS" id="CCDS28342.1"/>
<dbReference type="RefSeq" id="NP_766635.1">
    <property type="nucleotide sequence ID" value="NM_173047.3"/>
</dbReference>
<dbReference type="SMR" id="Q8K354"/>
<dbReference type="BioGRID" id="225103">
    <property type="interactions" value="4"/>
</dbReference>
<dbReference type="FunCoup" id="Q8K354">
    <property type="interactions" value="924"/>
</dbReference>
<dbReference type="IntAct" id="Q8K354">
    <property type="interactions" value="2"/>
</dbReference>
<dbReference type="MINT" id="Q8K354"/>
<dbReference type="STRING" id="10090.ENSMUSP00000047712"/>
<dbReference type="GlyGen" id="Q8K354">
    <property type="glycosylation" value="1 site, 1 O-linked glycan (1 site)"/>
</dbReference>
<dbReference type="iPTMnet" id="Q8K354"/>
<dbReference type="PhosphoSitePlus" id="Q8K354"/>
<dbReference type="SwissPalm" id="Q8K354"/>
<dbReference type="jPOST" id="Q8K354"/>
<dbReference type="PaxDb" id="10090-ENSMUSP00000047712"/>
<dbReference type="PeptideAtlas" id="Q8K354"/>
<dbReference type="ProteomicsDB" id="279932"/>
<dbReference type="Pumba" id="Q8K354"/>
<dbReference type="Antibodypedia" id="8258">
    <property type="antibodies" value="319 antibodies from 34 providers"/>
</dbReference>
<dbReference type="DNASU" id="109857"/>
<dbReference type="Ensembl" id="ENSMUST00000039620.7">
    <property type="protein sequence ID" value="ENSMUSP00000047712.7"/>
    <property type="gene ID" value="ENSMUSG00000022947.9"/>
</dbReference>
<dbReference type="GeneID" id="109857"/>
<dbReference type="KEGG" id="mmu:109857"/>
<dbReference type="UCSC" id="uc007zzs.2">
    <property type="organism name" value="mouse"/>
</dbReference>
<dbReference type="AGR" id="MGI:1309992"/>
<dbReference type="CTD" id="874"/>
<dbReference type="MGI" id="MGI:1309992">
    <property type="gene designation" value="Cbr3"/>
</dbReference>
<dbReference type="VEuPathDB" id="HostDB:ENSMUSG00000022947"/>
<dbReference type="eggNOG" id="KOG1208">
    <property type="taxonomic scope" value="Eukaryota"/>
</dbReference>
<dbReference type="GeneTree" id="ENSGT00940000162541"/>
<dbReference type="HOGENOM" id="CLU_010194_9_0_1"/>
<dbReference type="InParanoid" id="Q8K354"/>
<dbReference type="OMA" id="MAGDYGS"/>
<dbReference type="OrthoDB" id="7289984at2759"/>
<dbReference type="PhylomeDB" id="Q8K354"/>
<dbReference type="TreeFam" id="TF329359"/>
<dbReference type="BRENDA" id="1.1.1.184">
    <property type="organism ID" value="3474"/>
</dbReference>
<dbReference type="Reactome" id="R-MMU-211945">
    <property type="pathway name" value="Phase I - Functionalization of compounds"/>
</dbReference>
<dbReference type="BioGRID-ORCS" id="109857">
    <property type="hits" value="0 hits in 79 CRISPR screens"/>
</dbReference>
<dbReference type="ChiTaRS" id="Cbr3">
    <property type="organism name" value="mouse"/>
</dbReference>
<dbReference type="PRO" id="PR:Q8K354"/>
<dbReference type="Proteomes" id="UP000000589">
    <property type="component" value="Chromosome 16"/>
</dbReference>
<dbReference type="RNAct" id="Q8K354">
    <property type="molecule type" value="protein"/>
</dbReference>
<dbReference type="Bgee" id="ENSMUSG00000022947">
    <property type="expression patterns" value="Expressed in epithelium of stomach and 205 other cell types or tissues"/>
</dbReference>
<dbReference type="ExpressionAtlas" id="Q8K354">
    <property type="expression patterns" value="baseline and differential"/>
</dbReference>
<dbReference type="GO" id="GO:0005829">
    <property type="term" value="C:cytosol"/>
    <property type="evidence" value="ECO:0000250"/>
    <property type="project" value="UniProtKB"/>
</dbReference>
<dbReference type="GO" id="GO:0005654">
    <property type="term" value="C:nucleoplasm"/>
    <property type="evidence" value="ECO:0007669"/>
    <property type="project" value="Ensembl"/>
</dbReference>
<dbReference type="GO" id="GO:0000253">
    <property type="term" value="F:3-beta-hydroxysteroid 3-dehydrogenase (NADP+) activity"/>
    <property type="evidence" value="ECO:0007669"/>
    <property type="project" value="Ensembl"/>
</dbReference>
<dbReference type="GO" id="GO:0004090">
    <property type="term" value="F:carbonyl reductase (NADPH) activity"/>
    <property type="evidence" value="ECO:0000250"/>
    <property type="project" value="UniProtKB"/>
</dbReference>
<dbReference type="GO" id="GO:0070402">
    <property type="term" value="F:NADPH binding"/>
    <property type="evidence" value="ECO:0007669"/>
    <property type="project" value="Ensembl"/>
</dbReference>
<dbReference type="GO" id="GO:0008753">
    <property type="term" value="F:NADPH dehydrogenase (quinone) activity"/>
    <property type="evidence" value="ECO:0000250"/>
    <property type="project" value="UniProtKB"/>
</dbReference>
<dbReference type="GO" id="GO:0050890">
    <property type="term" value="P:cognition"/>
    <property type="evidence" value="ECO:0007669"/>
    <property type="project" value="Ensembl"/>
</dbReference>
<dbReference type="GO" id="GO:0042376">
    <property type="term" value="P:phylloquinone catabolic process"/>
    <property type="evidence" value="ECO:0007669"/>
    <property type="project" value="Ensembl"/>
</dbReference>
<dbReference type="CDD" id="cd05324">
    <property type="entry name" value="carb_red_PTCR-like_SDR_c"/>
    <property type="match status" value="1"/>
</dbReference>
<dbReference type="FunFam" id="3.40.50.720:FF:000164">
    <property type="entry name" value="Carbonyl reductase [NADPH] 1"/>
    <property type="match status" value="1"/>
</dbReference>
<dbReference type="Gene3D" id="3.40.50.720">
    <property type="entry name" value="NAD(P)-binding Rossmann-like Domain"/>
    <property type="match status" value="1"/>
</dbReference>
<dbReference type="InterPro" id="IPR045313">
    <property type="entry name" value="CBR1-like"/>
</dbReference>
<dbReference type="InterPro" id="IPR036291">
    <property type="entry name" value="NAD(P)-bd_dom_sf"/>
</dbReference>
<dbReference type="InterPro" id="IPR020904">
    <property type="entry name" value="Sc_DH/Rdtase_CS"/>
</dbReference>
<dbReference type="InterPro" id="IPR002347">
    <property type="entry name" value="SDR_fam"/>
</dbReference>
<dbReference type="PANTHER" id="PTHR43963">
    <property type="entry name" value="CARBONYL REDUCTASE 1-RELATED"/>
    <property type="match status" value="1"/>
</dbReference>
<dbReference type="PANTHER" id="PTHR43963:SF3">
    <property type="entry name" value="CARBONYL REDUCTASE [NADPH] 3"/>
    <property type="match status" value="1"/>
</dbReference>
<dbReference type="Pfam" id="PF00106">
    <property type="entry name" value="adh_short"/>
    <property type="match status" value="2"/>
</dbReference>
<dbReference type="PRINTS" id="PR00081">
    <property type="entry name" value="GDHRDH"/>
</dbReference>
<dbReference type="PRINTS" id="PR00080">
    <property type="entry name" value="SDRFAMILY"/>
</dbReference>
<dbReference type="SUPFAM" id="SSF51735">
    <property type="entry name" value="NAD(P)-binding Rossmann-fold domains"/>
    <property type="match status" value="1"/>
</dbReference>
<dbReference type="PROSITE" id="PS00061">
    <property type="entry name" value="ADH_SHORT"/>
    <property type="match status" value="1"/>
</dbReference>
<feature type="initiator methionine" description="Removed" evidence="3">
    <location>
        <position position="1"/>
    </location>
</feature>
<feature type="chain" id="PRO_0000415806" description="Carbonyl reductase [NADPH] 3">
    <location>
        <begin position="2"/>
        <end position="277"/>
    </location>
</feature>
<feature type="active site" description="Proton acceptor" evidence="5">
    <location>
        <position position="194"/>
    </location>
</feature>
<feature type="binding site" evidence="2">
    <location>
        <begin position="10"/>
        <end position="34"/>
    </location>
    <ligand>
        <name>NADP(+)</name>
        <dbReference type="ChEBI" id="CHEBI:58349"/>
    </ligand>
</feature>
<feature type="binding site" evidence="2">
    <location>
        <begin position="38"/>
        <end position="42"/>
    </location>
    <ligand>
        <name>NADP(+)</name>
        <dbReference type="ChEBI" id="CHEBI:58349"/>
    </ligand>
</feature>
<feature type="binding site" evidence="2">
    <location>
        <begin position="63"/>
        <end position="64"/>
    </location>
    <ligand>
        <name>NADP(+)</name>
        <dbReference type="ChEBI" id="CHEBI:58349"/>
    </ligand>
</feature>
<feature type="binding site" evidence="2">
    <location>
        <position position="90"/>
    </location>
    <ligand>
        <name>NADP(+)</name>
        <dbReference type="ChEBI" id="CHEBI:58349"/>
    </ligand>
</feature>
<feature type="binding site" evidence="1">
    <location>
        <position position="140"/>
    </location>
    <ligand>
        <name>substrate</name>
    </ligand>
</feature>
<feature type="binding site" evidence="2">
    <location>
        <begin position="194"/>
        <end position="198"/>
    </location>
    <ligand>
        <name>NADP(+)</name>
        <dbReference type="ChEBI" id="CHEBI:58349"/>
    </ligand>
</feature>
<feature type="modified residue" description="N-acetylserine" evidence="3">
    <location>
        <position position="2"/>
    </location>
</feature>
<feature type="modified residue" description="Phosphoserine" evidence="4">
    <location>
        <position position="30"/>
    </location>
</feature>
<gene>
    <name type="primary">Cbr3</name>
</gene>
<organism>
    <name type="scientific">Mus musculus</name>
    <name type="common">Mouse</name>
    <dbReference type="NCBI Taxonomy" id="10090"/>
    <lineage>
        <taxon>Eukaryota</taxon>
        <taxon>Metazoa</taxon>
        <taxon>Chordata</taxon>
        <taxon>Craniata</taxon>
        <taxon>Vertebrata</taxon>
        <taxon>Euteleostomi</taxon>
        <taxon>Mammalia</taxon>
        <taxon>Eutheria</taxon>
        <taxon>Euarchontoglires</taxon>
        <taxon>Glires</taxon>
        <taxon>Rodentia</taxon>
        <taxon>Myomorpha</taxon>
        <taxon>Muroidea</taxon>
        <taxon>Muridae</taxon>
        <taxon>Murinae</taxon>
        <taxon>Mus</taxon>
        <taxon>Mus</taxon>
    </lineage>
</organism>
<reference key="1">
    <citation type="journal article" date="2005" name="Science">
        <title>The transcriptional landscape of the mammalian genome.</title>
        <authorList>
            <person name="Carninci P."/>
            <person name="Kasukawa T."/>
            <person name="Katayama S."/>
            <person name="Gough J."/>
            <person name="Frith M.C."/>
            <person name="Maeda N."/>
            <person name="Oyama R."/>
            <person name="Ravasi T."/>
            <person name="Lenhard B."/>
            <person name="Wells C."/>
            <person name="Kodzius R."/>
            <person name="Shimokawa K."/>
            <person name="Bajic V.B."/>
            <person name="Brenner S.E."/>
            <person name="Batalov S."/>
            <person name="Forrest A.R."/>
            <person name="Zavolan M."/>
            <person name="Davis M.J."/>
            <person name="Wilming L.G."/>
            <person name="Aidinis V."/>
            <person name="Allen J.E."/>
            <person name="Ambesi-Impiombato A."/>
            <person name="Apweiler R."/>
            <person name="Aturaliya R.N."/>
            <person name="Bailey T.L."/>
            <person name="Bansal M."/>
            <person name="Baxter L."/>
            <person name="Beisel K.W."/>
            <person name="Bersano T."/>
            <person name="Bono H."/>
            <person name="Chalk A.M."/>
            <person name="Chiu K.P."/>
            <person name="Choudhary V."/>
            <person name="Christoffels A."/>
            <person name="Clutterbuck D.R."/>
            <person name="Crowe M.L."/>
            <person name="Dalla E."/>
            <person name="Dalrymple B.P."/>
            <person name="de Bono B."/>
            <person name="Della Gatta G."/>
            <person name="di Bernardo D."/>
            <person name="Down T."/>
            <person name="Engstrom P."/>
            <person name="Fagiolini M."/>
            <person name="Faulkner G."/>
            <person name="Fletcher C.F."/>
            <person name="Fukushima T."/>
            <person name="Furuno M."/>
            <person name="Futaki S."/>
            <person name="Gariboldi M."/>
            <person name="Georgii-Hemming P."/>
            <person name="Gingeras T.R."/>
            <person name="Gojobori T."/>
            <person name="Green R.E."/>
            <person name="Gustincich S."/>
            <person name="Harbers M."/>
            <person name="Hayashi Y."/>
            <person name="Hensch T.K."/>
            <person name="Hirokawa N."/>
            <person name="Hill D."/>
            <person name="Huminiecki L."/>
            <person name="Iacono M."/>
            <person name="Ikeo K."/>
            <person name="Iwama A."/>
            <person name="Ishikawa T."/>
            <person name="Jakt M."/>
            <person name="Kanapin A."/>
            <person name="Katoh M."/>
            <person name="Kawasawa Y."/>
            <person name="Kelso J."/>
            <person name="Kitamura H."/>
            <person name="Kitano H."/>
            <person name="Kollias G."/>
            <person name="Krishnan S.P."/>
            <person name="Kruger A."/>
            <person name="Kummerfeld S.K."/>
            <person name="Kurochkin I.V."/>
            <person name="Lareau L.F."/>
            <person name="Lazarevic D."/>
            <person name="Lipovich L."/>
            <person name="Liu J."/>
            <person name="Liuni S."/>
            <person name="McWilliam S."/>
            <person name="Madan Babu M."/>
            <person name="Madera M."/>
            <person name="Marchionni L."/>
            <person name="Matsuda H."/>
            <person name="Matsuzawa S."/>
            <person name="Miki H."/>
            <person name="Mignone F."/>
            <person name="Miyake S."/>
            <person name="Morris K."/>
            <person name="Mottagui-Tabar S."/>
            <person name="Mulder N."/>
            <person name="Nakano N."/>
            <person name="Nakauchi H."/>
            <person name="Ng P."/>
            <person name="Nilsson R."/>
            <person name="Nishiguchi S."/>
            <person name="Nishikawa S."/>
            <person name="Nori F."/>
            <person name="Ohara O."/>
            <person name="Okazaki Y."/>
            <person name="Orlando V."/>
            <person name="Pang K.C."/>
            <person name="Pavan W.J."/>
            <person name="Pavesi G."/>
            <person name="Pesole G."/>
            <person name="Petrovsky N."/>
            <person name="Piazza S."/>
            <person name="Reed J."/>
            <person name="Reid J.F."/>
            <person name="Ring B.Z."/>
            <person name="Ringwald M."/>
            <person name="Rost B."/>
            <person name="Ruan Y."/>
            <person name="Salzberg S.L."/>
            <person name="Sandelin A."/>
            <person name="Schneider C."/>
            <person name="Schoenbach C."/>
            <person name="Sekiguchi K."/>
            <person name="Semple C.A."/>
            <person name="Seno S."/>
            <person name="Sessa L."/>
            <person name="Sheng Y."/>
            <person name="Shibata Y."/>
            <person name="Shimada H."/>
            <person name="Shimada K."/>
            <person name="Silva D."/>
            <person name="Sinclair B."/>
            <person name="Sperling S."/>
            <person name="Stupka E."/>
            <person name="Sugiura K."/>
            <person name="Sultana R."/>
            <person name="Takenaka Y."/>
            <person name="Taki K."/>
            <person name="Tammoja K."/>
            <person name="Tan S.L."/>
            <person name="Tang S."/>
            <person name="Taylor M.S."/>
            <person name="Tegner J."/>
            <person name="Teichmann S.A."/>
            <person name="Ueda H.R."/>
            <person name="van Nimwegen E."/>
            <person name="Verardo R."/>
            <person name="Wei C.L."/>
            <person name="Yagi K."/>
            <person name="Yamanishi H."/>
            <person name="Zabarovsky E."/>
            <person name="Zhu S."/>
            <person name="Zimmer A."/>
            <person name="Hide W."/>
            <person name="Bult C."/>
            <person name="Grimmond S.M."/>
            <person name="Teasdale R.D."/>
            <person name="Liu E.T."/>
            <person name="Brusic V."/>
            <person name="Quackenbush J."/>
            <person name="Wahlestedt C."/>
            <person name="Mattick J.S."/>
            <person name="Hume D.A."/>
            <person name="Kai C."/>
            <person name="Sasaki D."/>
            <person name="Tomaru Y."/>
            <person name="Fukuda S."/>
            <person name="Kanamori-Katayama M."/>
            <person name="Suzuki M."/>
            <person name="Aoki J."/>
            <person name="Arakawa T."/>
            <person name="Iida J."/>
            <person name="Imamura K."/>
            <person name="Itoh M."/>
            <person name="Kato T."/>
            <person name="Kawaji H."/>
            <person name="Kawagashira N."/>
            <person name="Kawashima T."/>
            <person name="Kojima M."/>
            <person name="Kondo S."/>
            <person name="Konno H."/>
            <person name="Nakano K."/>
            <person name="Ninomiya N."/>
            <person name="Nishio T."/>
            <person name="Okada M."/>
            <person name="Plessy C."/>
            <person name="Shibata K."/>
            <person name="Shiraki T."/>
            <person name="Suzuki S."/>
            <person name="Tagami M."/>
            <person name="Waki K."/>
            <person name="Watahiki A."/>
            <person name="Okamura-Oho Y."/>
            <person name="Suzuki H."/>
            <person name="Kawai J."/>
            <person name="Hayashizaki Y."/>
        </authorList>
    </citation>
    <scope>NUCLEOTIDE SEQUENCE [LARGE SCALE MRNA]</scope>
    <source>
        <strain>C57BL/6J</strain>
        <tissue>Tongue</tissue>
    </source>
</reference>
<reference key="2">
    <citation type="journal article" date="2009" name="PLoS Biol.">
        <title>Lineage-specific biology revealed by a finished genome assembly of the mouse.</title>
        <authorList>
            <person name="Church D.M."/>
            <person name="Goodstadt L."/>
            <person name="Hillier L.W."/>
            <person name="Zody M.C."/>
            <person name="Goldstein S."/>
            <person name="She X."/>
            <person name="Bult C.J."/>
            <person name="Agarwala R."/>
            <person name="Cherry J.L."/>
            <person name="DiCuccio M."/>
            <person name="Hlavina W."/>
            <person name="Kapustin Y."/>
            <person name="Meric P."/>
            <person name="Maglott D."/>
            <person name="Birtle Z."/>
            <person name="Marques A.C."/>
            <person name="Graves T."/>
            <person name="Zhou S."/>
            <person name="Teague B."/>
            <person name="Potamousis K."/>
            <person name="Churas C."/>
            <person name="Place M."/>
            <person name="Herschleb J."/>
            <person name="Runnheim R."/>
            <person name="Forrest D."/>
            <person name="Amos-Landgraf J."/>
            <person name="Schwartz D.C."/>
            <person name="Cheng Z."/>
            <person name="Lindblad-Toh K."/>
            <person name="Eichler E.E."/>
            <person name="Ponting C.P."/>
        </authorList>
    </citation>
    <scope>NUCLEOTIDE SEQUENCE [LARGE SCALE GENOMIC DNA]</scope>
    <source>
        <strain>C57BL/6J</strain>
    </source>
</reference>
<reference key="3">
    <citation type="journal article" date="2004" name="Genome Res.">
        <title>The status, quality, and expansion of the NIH full-length cDNA project: the Mammalian Gene Collection (MGC).</title>
        <authorList>
            <consortium name="The MGC Project Team"/>
        </authorList>
    </citation>
    <scope>NUCLEOTIDE SEQUENCE [LARGE SCALE MRNA]</scope>
    <source>
        <strain>C57BL/6J</strain>
        <strain>Czech II</strain>
        <strain>FVB/N-3</strain>
        <tissue>Lung</tissue>
        <tissue>Mammary gland</tissue>
        <tissue>Mammary tumor</tissue>
    </source>
</reference>
<reference key="4">
    <citation type="submission" date="2005-09" db="EMBL/GenBank/DDBJ databases">
        <authorList>
            <person name="Mural R.J."/>
            <person name="Adams M.D."/>
            <person name="Myers E.W."/>
            <person name="Smith H.O."/>
            <person name="Venter J.C."/>
        </authorList>
    </citation>
    <scope>NUCLEOTIDE SEQUENCE [LARGE SCALE GENOMIC DNA]</scope>
</reference>
<reference key="5">
    <citation type="journal article" date="2010" name="Cell">
        <title>A tissue-specific atlas of mouse protein phosphorylation and expression.</title>
        <authorList>
            <person name="Huttlin E.L."/>
            <person name="Jedrychowski M.P."/>
            <person name="Elias J.E."/>
            <person name="Goswami T."/>
            <person name="Rad R."/>
            <person name="Beausoleil S.A."/>
            <person name="Villen J."/>
            <person name="Haas W."/>
            <person name="Sowa M.E."/>
            <person name="Gygi S.P."/>
        </authorList>
    </citation>
    <scope>IDENTIFICATION BY MASS SPECTROMETRY [LARGE SCALE ANALYSIS]</scope>
    <source>
        <tissue>Brain</tissue>
        <tissue>Brown adipose tissue</tissue>
        <tissue>Heart</tissue>
        <tissue>Lung</tissue>
        <tissue>Pancreas</tissue>
        <tissue>Spleen</tissue>
        <tissue>Testis</tissue>
    </source>
</reference>
<keyword id="KW-0007">Acetylation</keyword>
<keyword id="KW-0963">Cytoplasm</keyword>
<keyword id="KW-0521">NADP</keyword>
<keyword id="KW-0560">Oxidoreductase</keyword>
<keyword id="KW-0597">Phosphoprotein</keyword>
<keyword id="KW-1185">Reference proteome</keyword>
<evidence type="ECO:0000250" key="1"/>
<evidence type="ECO:0000250" key="2">
    <source>
        <dbReference type="UniProtKB" id="O75828"/>
    </source>
</evidence>
<evidence type="ECO:0000250" key="3">
    <source>
        <dbReference type="UniProtKB" id="P16152"/>
    </source>
</evidence>
<evidence type="ECO:0000250" key="4">
    <source>
        <dbReference type="UniProtKB" id="P48758"/>
    </source>
</evidence>
<evidence type="ECO:0000255" key="5">
    <source>
        <dbReference type="PROSITE-ProRule" id="PRU10001"/>
    </source>
</evidence>
<evidence type="ECO:0000305" key="6"/>